<proteinExistence type="inferred from homology"/>
<sequence length="58" mass="6419">MSTIKIKQVKSRIGAPADQKRTLDALGLRKLNRVVEHESTPSILGMVDKVKHLVAIVK</sequence>
<comment type="subunit">
    <text evidence="1">Part of the 50S ribosomal subunit.</text>
</comment>
<comment type="similarity">
    <text evidence="1">Belongs to the universal ribosomal protein uL30 family.</text>
</comment>
<name>RL30_BACFN</name>
<protein>
    <recommendedName>
        <fullName evidence="1">Large ribosomal subunit protein uL30</fullName>
    </recommendedName>
    <alternativeName>
        <fullName evidence="2">50S ribosomal protein L30</fullName>
    </alternativeName>
</protein>
<dbReference type="EMBL" id="CR626927">
    <property type="protein sequence ID" value="CAH09661.1"/>
    <property type="molecule type" value="Genomic_DNA"/>
</dbReference>
<dbReference type="RefSeq" id="WP_004296332.1">
    <property type="nucleotide sequence ID" value="NZ_UFTH01000001.1"/>
</dbReference>
<dbReference type="SMR" id="Q5L8C7"/>
<dbReference type="PaxDb" id="272559-BF9343_3880"/>
<dbReference type="GeneID" id="93048792"/>
<dbReference type="KEGG" id="bfs:BF9343_3880"/>
<dbReference type="eggNOG" id="COG1841">
    <property type="taxonomic scope" value="Bacteria"/>
</dbReference>
<dbReference type="HOGENOM" id="CLU_131047_1_1_10"/>
<dbReference type="Proteomes" id="UP000006731">
    <property type="component" value="Chromosome"/>
</dbReference>
<dbReference type="GO" id="GO:0022625">
    <property type="term" value="C:cytosolic large ribosomal subunit"/>
    <property type="evidence" value="ECO:0007669"/>
    <property type="project" value="TreeGrafter"/>
</dbReference>
<dbReference type="GO" id="GO:0003735">
    <property type="term" value="F:structural constituent of ribosome"/>
    <property type="evidence" value="ECO:0007669"/>
    <property type="project" value="InterPro"/>
</dbReference>
<dbReference type="GO" id="GO:0006412">
    <property type="term" value="P:translation"/>
    <property type="evidence" value="ECO:0007669"/>
    <property type="project" value="UniProtKB-UniRule"/>
</dbReference>
<dbReference type="CDD" id="cd01658">
    <property type="entry name" value="Ribosomal_L30"/>
    <property type="match status" value="1"/>
</dbReference>
<dbReference type="FunFam" id="3.30.1390.20:FF:000001">
    <property type="entry name" value="50S ribosomal protein L30"/>
    <property type="match status" value="1"/>
</dbReference>
<dbReference type="Gene3D" id="3.30.1390.20">
    <property type="entry name" value="Ribosomal protein L30, ferredoxin-like fold domain"/>
    <property type="match status" value="1"/>
</dbReference>
<dbReference type="HAMAP" id="MF_01371_B">
    <property type="entry name" value="Ribosomal_uL30_B"/>
    <property type="match status" value="1"/>
</dbReference>
<dbReference type="InterPro" id="IPR036919">
    <property type="entry name" value="Ribo_uL30_ferredoxin-like_sf"/>
</dbReference>
<dbReference type="InterPro" id="IPR005996">
    <property type="entry name" value="Ribosomal_uL30_bac-type"/>
</dbReference>
<dbReference type="InterPro" id="IPR016082">
    <property type="entry name" value="Ribosomal_uL30_ferredoxin-like"/>
</dbReference>
<dbReference type="NCBIfam" id="TIGR01308">
    <property type="entry name" value="rpmD_bact"/>
    <property type="match status" value="1"/>
</dbReference>
<dbReference type="PANTHER" id="PTHR15892:SF2">
    <property type="entry name" value="LARGE RIBOSOMAL SUBUNIT PROTEIN UL30M"/>
    <property type="match status" value="1"/>
</dbReference>
<dbReference type="PANTHER" id="PTHR15892">
    <property type="entry name" value="MITOCHONDRIAL RIBOSOMAL PROTEIN L30"/>
    <property type="match status" value="1"/>
</dbReference>
<dbReference type="Pfam" id="PF00327">
    <property type="entry name" value="Ribosomal_L30"/>
    <property type="match status" value="1"/>
</dbReference>
<dbReference type="PIRSF" id="PIRSF002211">
    <property type="entry name" value="Ribosomal_L30_bac-type"/>
    <property type="match status" value="1"/>
</dbReference>
<dbReference type="SUPFAM" id="SSF55129">
    <property type="entry name" value="Ribosomal protein L30p/L7e"/>
    <property type="match status" value="1"/>
</dbReference>
<gene>
    <name evidence="1" type="primary">rpmD</name>
    <name type="ordered locus">BF3985</name>
</gene>
<accession>Q5L8C7</accession>
<keyword id="KW-0687">Ribonucleoprotein</keyword>
<keyword id="KW-0689">Ribosomal protein</keyword>
<organism>
    <name type="scientific">Bacteroides fragilis (strain ATCC 25285 / DSM 2151 / CCUG 4856 / JCM 11019 / LMG 10263 / NCTC 9343 / Onslow / VPI 2553 / EN-2)</name>
    <dbReference type="NCBI Taxonomy" id="272559"/>
    <lineage>
        <taxon>Bacteria</taxon>
        <taxon>Pseudomonadati</taxon>
        <taxon>Bacteroidota</taxon>
        <taxon>Bacteroidia</taxon>
        <taxon>Bacteroidales</taxon>
        <taxon>Bacteroidaceae</taxon>
        <taxon>Bacteroides</taxon>
    </lineage>
</organism>
<feature type="chain" id="PRO_1000056006" description="Large ribosomal subunit protein uL30">
    <location>
        <begin position="1"/>
        <end position="58"/>
    </location>
</feature>
<evidence type="ECO:0000255" key="1">
    <source>
        <dbReference type="HAMAP-Rule" id="MF_01371"/>
    </source>
</evidence>
<evidence type="ECO:0000305" key="2"/>
<reference key="1">
    <citation type="journal article" date="2005" name="Science">
        <title>Extensive DNA inversions in the B. fragilis genome control variable gene expression.</title>
        <authorList>
            <person name="Cerdeno-Tarraga A.-M."/>
            <person name="Patrick S."/>
            <person name="Crossman L.C."/>
            <person name="Blakely G."/>
            <person name="Abratt V."/>
            <person name="Lennard N."/>
            <person name="Poxton I."/>
            <person name="Duerden B."/>
            <person name="Harris B."/>
            <person name="Quail M.A."/>
            <person name="Barron A."/>
            <person name="Clark L."/>
            <person name="Corton C."/>
            <person name="Doggett J."/>
            <person name="Holden M.T.G."/>
            <person name="Larke N."/>
            <person name="Line A."/>
            <person name="Lord A."/>
            <person name="Norbertczak H."/>
            <person name="Ormond D."/>
            <person name="Price C."/>
            <person name="Rabbinowitsch E."/>
            <person name="Woodward J."/>
            <person name="Barrell B.G."/>
            <person name="Parkhill J."/>
        </authorList>
    </citation>
    <scope>NUCLEOTIDE SEQUENCE [LARGE SCALE GENOMIC DNA]</scope>
    <source>
        <strain>ATCC 25285 / DSM 2151 / CCUG 4856 / JCM 11019 / LMG 10263 / NCTC 9343 / Onslow / VPI 2553 / EN-2</strain>
    </source>
</reference>